<protein>
    <recommendedName>
        <fullName evidence="1">Cell division protein ZipA</fullName>
    </recommendedName>
</protein>
<evidence type="ECO:0000255" key="1">
    <source>
        <dbReference type="HAMAP-Rule" id="MF_00509"/>
    </source>
</evidence>
<evidence type="ECO:0000256" key="2">
    <source>
        <dbReference type="SAM" id="MobiDB-lite"/>
    </source>
</evidence>
<feature type="chain" id="PRO_0000214530" description="Cell division protein ZipA">
    <location>
        <begin position="1"/>
        <end position="352"/>
    </location>
</feature>
<feature type="topological domain" description="Periplasmic" evidence="1">
    <location>
        <begin position="1"/>
        <end position="5"/>
    </location>
</feature>
<feature type="transmembrane region" description="Helical" evidence="1">
    <location>
        <begin position="6"/>
        <end position="26"/>
    </location>
</feature>
<feature type="topological domain" description="Cytoplasmic" evidence="1">
    <location>
        <begin position="27"/>
        <end position="352"/>
    </location>
</feature>
<feature type="region of interest" description="Disordered" evidence="2">
    <location>
        <begin position="35"/>
        <end position="56"/>
    </location>
</feature>
<feature type="compositionally biased region" description="Basic and acidic residues" evidence="2">
    <location>
        <begin position="35"/>
        <end position="54"/>
    </location>
</feature>
<comment type="function">
    <text evidence="1">Essential cell division protein that stabilizes the FtsZ protofilaments by cross-linking them and that serves as a cytoplasmic membrane anchor for the Z ring. Also required for the recruitment to the septal ring of downstream cell division proteins.</text>
</comment>
<comment type="subunit">
    <text evidence="1">Interacts with FtsZ via their C-terminal domains.</text>
</comment>
<comment type="subcellular location">
    <subcellularLocation>
        <location evidence="1">Cell inner membrane</location>
        <topology evidence="1">Single-pass type I membrane protein</topology>
    </subcellularLocation>
    <text evidence="1">Localizes to the Z ring in an FtsZ-dependent manner.</text>
</comment>
<comment type="similarity">
    <text evidence="1">Belongs to the ZipA family.</text>
</comment>
<proteinExistence type="inferred from homology"/>
<name>ZIPA_PHOPR</name>
<gene>
    <name evidence="1" type="primary">zipA</name>
    <name type="ordered locus">PBPRA0866</name>
</gene>
<dbReference type="EMBL" id="CR378665">
    <property type="protein sequence ID" value="CAG19279.1"/>
    <property type="molecule type" value="Genomic_DNA"/>
</dbReference>
<dbReference type="RefSeq" id="WP_011217616.1">
    <property type="nucleotide sequence ID" value="NC_006370.1"/>
</dbReference>
<dbReference type="SMR" id="Q6LTU6"/>
<dbReference type="STRING" id="298386.PBPRA0866"/>
<dbReference type="KEGG" id="ppr:PBPRA0866"/>
<dbReference type="eggNOG" id="COG3115">
    <property type="taxonomic scope" value="Bacteria"/>
</dbReference>
<dbReference type="HOGENOM" id="CLU_030174_1_0_6"/>
<dbReference type="Proteomes" id="UP000000593">
    <property type="component" value="Chromosome 1"/>
</dbReference>
<dbReference type="GO" id="GO:0032153">
    <property type="term" value="C:cell division site"/>
    <property type="evidence" value="ECO:0007669"/>
    <property type="project" value="UniProtKB-UniRule"/>
</dbReference>
<dbReference type="GO" id="GO:0005886">
    <property type="term" value="C:plasma membrane"/>
    <property type="evidence" value="ECO:0007669"/>
    <property type="project" value="UniProtKB-SubCell"/>
</dbReference>
<dbReference type="GO" id="GO:0000917">
    <property type="term" value="P:division septum assembly"/>
    <property type="evidence" value="ECO:0007669"/>
    <property type="project" value="TreeGrafter"/>
</dbReference>
<dbReference type="GO" id="GO:0043093">
    <property type="term" value="P:FtsZ-dependent cytokinesis"/>
    <property type="evidence" value="ECO:0007669"/>
    <property type="project" value="UniProtKB-UniRule"/>
</dbReference>
<dbReference type="Gene3D" id="3.30.1400.10">
    <property type="entry name" value="ZipA, C-terminal FtsZ-binding domain"/>
    <property type="match status" value="1"/>
</dbReference>
<dbReference type="HAMAP" id="MF_00509">
    <property type="entry name" value="ZipA"/>
    <property type="match status" value="1"/>
</dbReference>
<dbReference type="InterPro" id="IPR011919">
    <property type="entry name" value="Cell_div_ZipA"/>
</dbReference>
<dbReference type="InterPro" id="IPR007449">
    <property type="entry name" value="ZipA_FtsZ-bd_C"/>
</dbReference>
<dbReference type="InterPro" id="IPR036765">
    <property type="entry name" value="ZipA_FtsZ-bd_C_sf"/>
</dbReference>
<dbReference type="NCBIfam" id="TIGR02205">
    <property type="entry name" value="septum_zipA"/>
    <property type="match status" value="1"/>
</dbReference>
<dbReference type="PANTHER" id="PTHR38685">
    <property type="entry name" value="CELL DIVISION PROTEIN ZIPA"/>
    <property type="match status" value="1"/>
</dbReference>
<dbReference type="PANTHER" id="PTHR38685:SF1">
    <property type="entry name" value="CELL DIVISION PROTEIN ZIPA"/>
    <property type="match status" value="1"/>
</dbReference>
<dbReference type="Pfam" id="PF04354">
    <property type="entry name" value="ZipA_C"/>
    <property type="match status" value="1"/>
</dbReference>
<dbReference type="SMART" id="SM00771">
    <property type="entry name" value="ZipA_C"/>
    <property type="match status" value="1"/>
</dbReference>
<dbReference type="SUPFAM" id="SSF64383">
    <property type="entry name" value="Cell-division protein ZipA, C-terminal domain"/>
    <property type="match status" value="1"/>
</dbReference>
<reference key="1">
    <citation type="journal article" date="2005" name="Science">
        <title>Life at depth: Photobacterium profundum genome sequence and expression analysis.</title>
        <authorList>
            <person name="Vezzi A."/>
            <person name="Campanaro S."/>
            <person name="D'Angelo M."/>
            <person name="Simonato F."/>
            <person name="Vitulo N."/>
            <person name="Lauro F.M."/>
            <person name="Cestaro A."/>
            <person name="Malacrida G."/>
            <person name="Simionati B."/>
            <person name="Cannata N."/>
            <person name="Romualdi C."/>
            <person name="Bartlett D.H."/>
            <person name="Valle G."/>
        </authorList>
    </citation>
    <scope>NUCLEOTIDE SEQUENCE [LARGE SCALE GENOMIC DNA]</scope>
    <source>
        <strain>ATCC BAA-1253 / SS9</strain>
    </source>
</reference>
<accession>Q6LTU6</accession>
<keyword id="KW-0131">Cell cycle</keyword>
<keyword id="KW-0132">Cell division</keyword>
<keyword id="KW-0997">Cell inner membrane</keyword>
<keyword id="KW-1003">Cell membrane</keyword>
<keyword id="KW-0472">Membrane</keyword>
<keyword id="KW-1185">Reference proteome</keyword>
<keyword id="KW-0812">Transmembrane</keyword>
<keyword id="KW-1133">Transmembrane helix</keyword>
<sequence>MQELRLVLIIVGALAISALLLHGLWTSRKEKPAKFGEKPLGKLDDSNRDTEGFDHTGVGSVRIINNAPEKDVAVHTSQRKEPELHFGEKIHADPLMDSPASVQVIDDMADLPRMSATSEKIEPKFSSDSVVPDPVATAVEEEPVRIAVEQPIQSEPASVVSDYTEVLNTPISDIPEVSEQEVKPEENKVLEPEPVIANVVPEPEPEPEPEPEPVLAPSYIALSVHARNGEMLQGAKLFQCLEQHNLIFGENAVYHRHADLAGTEPVLFSATNMVQPGNFPEDGGYNFETPGVSFYLMLPCYGSAKNNFNLMLQTVQRIADDLNADVLDHERAMVTPNRIAQYREKAKLYSQA</sequence>
<organism>
    <name type="scientific">Photobacterium profundum (strain SS9)</name>
    <dbReference type="NCBI Taxonomy" id="298386"/>
    <lineage>
        <taxon>Bacteria</taxon>
        <taxon>Pseudomonadati</taxon>
        <taxon>Pseudomonadota</taxon>
        <taxon>Gammaproteobacteria</taxon>
        <taxon>Vibrionales</taxon>
        <taxon>Vibrionaceae</taxon>
        <taxon>Photobacterium</taxon>
    </lineage>
</organism>